<feature type="chain" id="PRO_0000308387" description="Polyprotein P1234">
    <location>
        <begin position="1"/>
        <end position="2485"/>
    </location>
</feature>
<feature type="chain" id="PRO_0000228750" description="Polyprotein P123'">
    <location>
        <begin position="1"/>
        <end position="1878"/>
    </location>
</feature>
<feature type="chain" id="PRO_0000228751" description="Polyprotein P123">
    <location>
        <begin position="1"/>
        <end position="1871"/>
    </location>
</feature>
<feature type="chain" id="PRO_0000041200" description="mRNA-capping enzyme nsP1">
    <location>
        <begin position="1"/>
        <end position="535"/>
    </location>
</feature>
<feature type="chain" id="PRO_0000041201" description="Protease nsP2">
    <location>
        <begin position="536"/>
        <end position="1329"/>
    </location>
</feature>
<feature type="chain" id="PRO_0000228752" description="Non-structural protein 3'">
    <location>
        <begin position="1330"/>
        <end position="1878"/>
    </location>
</feature>
<feature type="chain" id="PRO_0000041202" description="Non-structural protein 3">
    <location>
        <begin position="1330"/>
        <end position="1871"/>
    </location>
</feature>
<feature type="chain" id="PRO_0000041203" description="RNA-directed RNA polymerase nsP4">
    <location>
        <begin position="1879"/>
        <end position="2485"/>
    </location>
</feature>
<feature type="domain" description="Alphavirus-like MT" evidence="11">
    <location>
        <begin position="28"/>
        <end position="259"/>
    </location>
</feature>
<feature type="domain" description="(+)RNA virus helicase ATP-binding" evidence="10">
    <location>
        <begin position="690"/>
        <end position="841"/>
    </location>
</feature>
<feature type="domain" description="(+)RNA virus helicase C-terminal" evidence="10">
    <location>
        <begin position="842"/>
        <end position="990"/>
    </location>
</feature>
<feature type="domain" description="Peptidase C9" evidence="9">
    <location>
        <begin position="1003"/>
        <end position="1322"/>
    </location>
</feature>
<feature type="domain" description="Macro" evidence="7">
    <location>
        <begin position="1328"/>
        <end position="1489"/>
    </location>
</feature>
<feature type="repeat" description="1" evidence="4">
    <location>
        <begin position="1810"/>
        <end position="1831"/>
    </location>
</feature>
<feature type="repeat" description="2" evidence="4">
    <location>
        <begin position="1844"/>
        <end position="1865"/>
    </location>
</feature>
<feature type="domain" description="RdRp catalytic" evidence="8">
    <location>
        <begin position="2242"/>
        <end position="2357"/>
    </location>
</feature>
<feature type="region of interest" description="NsP1 membrane-binding" evidence="3">
    <location>
        <begin position="244"/>
        <end position="263"/>
    </location>
</feature>
<feature type="region of interest" description="Nucleolus localization signal" evidence="3">
    <location>
        <begin position="1004"/>
        <end position="1023"/>
    </location>
</feature>
<feature type="region of interest" description="Disordered" evidence="12">
    <location>
        <begin position="1783"/>
        <end position="1810"/>
    </location>
</feature>
<feature type="region of interest" description="2 X 21 AA approximate repeats, binding to host FXR family members" evidence="4">
    <location>
        <begin position="1810"/>
        <end position="1865"/>
    </location>
</feature>
<feature type="short sequence motif" description="Nuclear export signal" evidence="4">
    <location>
        <begin position="1056"/>
        <end position="1065"/>
    </location>
</feature>
<feature type="short sequence motif" description="Nuclear localization signal" evidence="4">
    <location>
        <begin position="1179"/>
        <end position="1183"/>
    </location>
</feature>
<feature type="compositionally biased region" description="Polar residues" evidence="12">
    <location>
        <begin position="1798"/>
        <end position="1810"/>
    </location>
</feature>
<feature type="active site" description="For cysteine protease nsP2 activity" evidence="9">
    <location>
        <position position="1012"/>
    </location>
</feature>
<feature type="active site" description="For cysteine protease nsP2 activity" evidence="9">
    <location>
        <position position="1081"/>
    </location>
</feature>
<feature type="binding site" evidence="10">
    <location>
        <begin position="721"/>
        <end position="728"/>
    </location>
    <ligand>
        <name>a ribonucleoside 5'-triphosphate</name>
        <dbReference type="ChEBI" id="CHEBI:61557"/>
    </ligand>
</feature>
<feature type="binding site" evidence="5">
    <location>
        <position position="1339"/>
    </location>
    <ligand>
        <name>ADP-D-ribose</name>
        <dbReference type="ChEBI" id="CHEBI:57967"/>
    </ligand>
</feature>
<feature type="binding site" evidence="6">
    <location>
        <position position="1353"/>
    </location>
    <ligand>
        <name>ADP-D-ribose</name>
        <dbReference type="ChEBI" id="CHEBI:57967"/>
    </ligand>
</feature>
<feature type="binding site" evidence="6">
    <location>
        <position position="1361"/>
    </location>
    <ligand>
        <name>ADP-D-ribose</name>
        <dbReference type="ChEBI" id="CHEBI:57967"/>
    </ligand>
</feature>
<feature type="binding site" evidence="5">
    <location>
        <position position="1441"/>
    </location>
    <ligand>
        <name>ADP-D-ribose</name>
        <dbReference type="ChEBI" id="CHEBI:57967"/>
    </ligand>
</feature>
<feature type="binding site" evidence="5">
    <location>
        <position position="1442"/>
    </location>
    <ligand>
        <name>ADP-D-ribose</name>
        <dbReference type="ChEBI" id="CHEBI:57967"/>
    </ligand>
</feature>
<feature type="binding site" evidence="5">
    <location>
        <position position="1443"/>
    </location>
    <ligand>
        <name>ADP-D-ribose</name>
        <dbReference type="ChEBI" id="CHEBI:57967"/>
    </ligand>
</feature>
<feature type="binding site" evidence="2">
    <location>
        <position position="1596"/>
    </location>
    <ligand>
        <name>Zn(2+)</name>
        <dbReference type="ChEBI" id="CHEBI:29105"/>
    </ligand>
</feature>
<feature type="binding site" evidence="2">
    <location>
        <position position="1598"/>
    </location>
    <ligand>
        <name>Zn(2+)</name>
        <dbReference type="ChEBI" id="CHEBI:29105"/>
    </ligand>
</feature>
<feature type="binding site" evidence="2">
    <location>
        <position position="1621"/>
    </location>
    <ligand>
        <name>Zn(2+)</name>
        <dbReference type="ChEBI" id="CHEBI:29105"/>
    </ligand>
</feature>
<feature type="binding site" evidence="2">
    <location>
        <position position="1639"/>
    </location>
    <ligand>
        <name>Zn(2+)</name>
        <dbReference type="ChEBI" id="CHEBI:29105"/>
    </ligand>
</feature>
<feature type="site" description="Involved in the phosphoramide link with 7-methyl-GMP" evidence="4">
    <location>
        <position position="37"/>
    </location>
</feature>
<feature type="site" description="Cleavage; by protease nsP2" evidence="2">
    <location>
        <begin position="535"/>
        <end position="536"/>
    </location>
</feature>
<feature type="site" description="Cleavage; by protease nsP2" evidence="2">
    <location>
        <begin position="1329"/>
        <end position="1330"/>
    </location>
</feature>
<feature type="site" description="Cleavage; by protease nsP2" evidence="6">
    <location>
        <begin position="1878"/>
        <end position="1879"/>
    </location>
</feature>
<feature type="lipid moiety-binding region" description="S-palmitoyl cysteine; by host" evidence="6">
    <location>
        <position position="419"/>
    </location>
</feature>
<proteinExistence type="inferred from homology"/>
<organism>
    <name type="scientific">Venezuelan equine encephalitis virus (strain 3880)</name>
    <name type="common">VEEV</name>
    <dbReference type="NCBI Taxonomy" id="36382"/>
    <lineage>
        <taxon>Viruses</taxon>
        <taxon>Riboviria</taxon>
        <taxon>Orthornavirae</taxon>
        <taxon>Kitrinoviricota</taxon>
        <taxon>Alsuviricetes</taxon>
        <taxon>Martellivirales</taxon>
        <taxon>Togaviridae</taxon>
        <taxon>Alphavirus</taxon>
        <taxon>Venezuelan equine encephalitis virus</taxon>
    </lineage>
</organism>
<reference key="1">
    <citation type="journal article" date="1992" name="Virology">
        <title>Genetic evidence that epizootic Venezuelan equine encephalitis (VEE) viruses may have evolved from enzootic VEE subtype I-D virus.</title>
        <authorList>
            <person name="Kinney R.M."/>
            <person name="Tsuchiya K.R."/>
            <person name="Sneider J.M."/>
            <person name="Trent D.W."/>
        </authorList>
    </citation>
    <scope>NUCLEOTIDE SEQUENCE [GENOMIC RNA]</scope>
</reference>
<comment type="function">
    <molecule>Polyprotein P1234</molecule>
    <text evidence="6">Inactive precursor of the viral replicase, which is activated by cleavages carried out by the viral protease nsP2.</text>
</comment>
<comment type="function">
    <molecule>Polyprotein P123</molecule>
    <text evidence="2 13">The early replication complex formed by the polyprotein P123 and nsP4 synthesizes the minus-strand RNAs (antigenome) (By similarity). Polyprotein P123 is a short-lived polyprotein that accumulates during early stage of infection (Probable). As soon P123 is cleaved into mature proteins, the plus-strand RNAs synthesis begins (By similarity).</text>
</comment>
<comment type="function">
    <molecule>Polyprotein P123'</molecule>
    <text evidence="13">The early replication complex formed by the polyprotein P123' and nsP4 synthesizes minus-strand RNAs (antigenome) (Probable). Polyprotein P123' is a short-lived polyprotein that accumulates during early stage of infection (Probable). As soon P123' is cleaved into mature proteins, the plus-strand RNAs synthesis begins (Probable).</text>
</comment>
<comment type="function">
    <molecule>mRNA-capping enzyme nsP1</molecule>
    <text evidence="2 3 4 6 13">Cytoplasmic capping enzyme that catalyzes two virus-specific reactions: methyltransferase and nsP1 guanylyltransferase (By similarity). mRNA-capping is necessary since all viral RNAs are synthesized in the cytoplasm, and host capping enzymes are restricted to the nucleus (Probable). The enzymatic reaction involves a covalent link between 7-methyl-GMP and nsP1, whereas eukaryotic capping enzymes form a covalent complex only with GMP (Probable). NsP1 capping consists in the following reactions: GTP is first methylated into 7-methyl-GMP and then is covalently linked to nsP1 to form the m7GMp-nsP1 complex from which 7-methyl-GMP complex is transferred to the mRNA to create the cap structure (By similarity). NsP1 is also needed for the initiation of the minus-strand RNAs synthesis (By similarity). Probably serves as a membrane anchor for the replication complex composed of nsP1-nsP4 (By similarity). Nsp1 is needed for the initiation of the minus-strand RNAs synthesis (By similarity). Palmitoylated nsP1 is remodeling host cell cytoskeleton, and induces filopodium-like structure formation at the surface of the host cell (By similarity).</text>
</comment>
<comment type="function">
    <molecule>Protease nsP2</molecule>
    <text evidence="2 3 4 6">Multifunctional protein whose N-terminus is part of the RNA polymerase complex and displays NTPase, RNA triphosphatase and helicase activities (By similarity). NTPase and RNA triphosphatase are involved in viral RNA capping and helicase keeps a check on the dsRNA replication intermediates (By similarity). The C-terminus harbors a protease that specifically cleaves the polyproteins and releases the mature proteins (By similarity). Required for the shutoff of minus-strand RNAs synthesis (By similarity). Inhibits host translation to ensure maximal viral gene expression and evade host immune response (By similarity).</text>
</comment>
<comment type="function">
    <molecule>Non-structural protein 3</molecule>
    <text evidence="2 4">Seems to be essential for minus-strand RNAs and subgenomic 26S mRNAs synthesis (By similarity). Displays mono-ADP-ribosylhydrolase activity (By similarity). ADP-ribosylation is a post-translational modification that controls various processes of the host cell and the virus probably needs to revert it for optimal viral replication (By similarity). Binds proteins of FXR family and sequesters them into the viral RNA replication complexes thereby inhibiting the formation of host stress granules on viral mRNAs (By similarity). The nsp3-FXR complexes bind viral RNAs and probably orchestrate the assembly of viral replication complexes, thanks to the ability of FXR family members to self-assemble and bind DNA (By similarity).</text>
</comment>
<comment type="function">
    <molecule>Non-structural protein 3'</molecule>
    <text evidence="2 13">Seems to be essential for minus-strand RNAs and subgenomic 26S mRNAs synthesis (By similarity). Displays mono-ADP-ribosylhydrolase activity (Probable). ADP-ribosylation is a post-translational modification that controls various processes of the host cell and the virus probably needs to revert it for optimal viral replication (Probable). Binds proteins of FXR family and sequesters them into the viral RNA replication complexes thereby inhibiting the formation of host stress granules on viral mRNAs (Probable). The nsp3'-FXR complexes bind viral RNAs and probably orchestrate the assembly of viral replication complexes, thanks to the ability of FXR family members to self-assemble and bind DNA (Probable).</text>
</comment>
<comment type="function">
    <molecule>RNA-directed RNA polymerase nsP4</molecule>
    <text evidence="2">RNA dependent RNA polymerase (By similarity). Replicates genomic and antigenomic RNA by recognizing replications specific signals. The early replication complex formed by the polyprotein P123 and nsP4 synthesizes minus-strand RNAs (By similarity). The late replication complex composed of fully processed nsP1-nsP4 is responsible for the production of genomic and subgenomic plus-strand RNAs (By similarity).</text>
</comment>
<comment type="catalytic activity">
    <reaction evidence="4">
        <text>GTP + S-adenosyl-L-methionine = N(7)-methyl-GTP + S-adenosyl-L-homocysteine</text>
        <dbReference type="Rhea" id="RHEA:46948"/>
        <dbReference type="ChEBI" id="CHEBI:37565"/>
        <dbReference type="ChEBI" id="CHEBI:57856"/>
        <dbReference type="ChEBI" id="CHEBI:59789"/>
        <dbReference type="ChEBI" id="CHEBI:87133"/>
    </reaction>
</comment>
<comment type="catalytic activity">
    <reaction evidence="4">
        <text>N(7)-methyl-GTP + L-histidyl-[protein] = N(tele)-(N(7)-methylguanosine 5'-phospho)-L-histidyl-[protein] + diphosphate</text>
        <dbReference type="Rhea" id="RHEA:54792"/>
        <dbReference type="Rhea" id="RHEA-COMP:9745"/>
        <dbReference type="Rhea" id="RHEA-COMP:13995"/>
        <dbReference type="ChEBI" id="CHEBI:29979"/>
        <dbReference type="ChEBI" id="CHEBI:33019"/>
        <dbReference type="ChEBI" id="CHEBI:87133"/>
        <dbReference type="ChEBI" id="CHEBI:138334"/>
    </reaction>
    <physiologicalReaction direction="left-to-right" evidence="4">
        <dbReference type="Rhea" id="RHEA:54793"/>
    </physiologicalReaction>
</comment>
<comment type="catalytic activity">
    <reaction evidence="4">
        <text>N(tele)-(N(7)-methylguanosine 5'-phospho)-L-histidyl-[protein] + a 5'-end diphospho-(purine-ribonucleoside) in mRNA + H(+) = a 5'-end (N(7)-methyl 5'-triphosphoguanosine)-(purine-ribonucleoside) in mRNA + L-histidyl-[protein]</text>
        <dbReference type="Rhea" id="RHEA:54800"/>
        <dbReference type="Rhea" id="RHEA-COMP:9745"/>
        <dbReference type="Rhea" id="RHEA-COMP:12925"/>
        <dbReference type="Rhea" id="RHEA-COMP:13929"/>
        <dbReference type="Rhea" id="RHEA-COMP:13995"/>
        <dbReference type="ChEBI" id="CHEBI:15378"/>
        <dbReference type="ChEBI" id="CHEBI:29979"/>
        <dbReference type="ChEBI" id="CHEBI:133968"/>
        <dbReference type="ChEBI" id="CHEBI:138276"/>
        <dbReference type="ChEBI" id="CHEBI:138334"/>
    </reaction>
</comment>
<comment type="catalytic activity">
    <reaction evidence="3">
        <text>a 5'-end triphospho-ribonucleoside in mRNA + H2O = a 5'-end diphospho-ribonucleoside in mRNA + phosphate + H(+)</text>
        <dbReference type="Rhea" id="RHEA:67004"/>
        <dbReference type="Rhea" id="RHEA-COMP:17164"/>
        <dbReference type="Rhea" id="RHEA-COMP:17165"/>
        <dbReference type="ChEBI" id="CHEBI:15377"/>
        <dbReference type="ChEBI" id="CHEBI:15378"/>
        <dbReference type="ChEBI" id="CHEBI:43474"/>
        <dbReference type="ChEBI" id="CHEBI:167616"/>
        <dbReference type="ChEBI" id="CHEBI:167618"/>
        <dbReference type="EC" id="3.6.1.74"/>
    </reaction>
    <physiologicalReaction direction="left-to-right" evidence="3">
        <dbReference type="Rhea" id="RHEA:67005"/>
    </physiologicalReaction>
</comment>
<comment type="catalytic activity">
    <reaction evidence="6">
        <text>a ribonucleoside 5'-triphosphate + H2O = a ribonucleoside 5'-diphosphate + phosphate + H(+)</text>
        <dbReference type="Rhea" id="RHEA:23680"/>
        <dbReference type="ChEBI" id="CHEBI:15377"/>
        <dbReference type="ChEBI" id="CHEBI:15378"/>
        <dbReference type="ChEBI" id="CHEBI:43474"/>
        <dbReference type="ChEBI" id="CHEBI:57930"/>
        <dbReference type="ChEBI" id="CHEBI:61557"/>
        <dbReference type="EC" id="3.6.1.15"/>
    </reaction>
</comment>
<comment type="catalytic activity">
    <reaction evidence="6">
        <text>ATP + H2O = ADP + phosphate + H(+)</text>
        <dbReference type="Rhea" id="RHEA:13065"/>
        <dbReference type="ChEBI" id="CHEBI:15377"/>
        <dbReference type="ChEBI" id="CHEBI:15378"/>
        <dbReference type="ChEBI" id="CHEBI:30616"/>
        <dbReference type="ChEBI" id="CHEBI:43474"/>
        <dbReference type="ChEBI" id="CHEBI:456216"/>
        <dbReference type="EC" id="3.6.4.13"/>
    </reaction>
</comment>
<comment type="catalytic activity">
    <reaction evidence="8">
        <text>RNA(n) + a ribonucleoside 5'-triphosphate = RNA(n+1) + diphosphate</text>
        <dbReference type="Rhea" id="RHEA:21248"/>
        <dbReference type="Rhea" id="RHEA-COMP:14527"/>
        <dbReference type="Rhea" id="RHEA-COMP:17342"/>
        <dbReference type="ChEBI" id="CHEBI:33019"/>
        <dbReference type="ChEBI" id="CHEBI:61557"/>
        <dbReference type="ChEBI" id="CHEBI:140395"/>
        <dbReference type="EC" id="2.7.7.48"/>
    </reaction>
</comment>
<comment type="catalytic activity">
    <reaction evidence="4">
        <text>4-O-(ADP-D-ribosyl)-L-aspartyl-[protein] + H2O = L-aspartyl-[protein] + ADP-D-ribose + H(+)</text>
        <dbReference type="Rhea" id="RHEA:54428"/>
        <dbReference type="Rhea" id="RHEA-COMP:9867"/>
        <dbReference type="Rhea" id="RHEA-COMP:13832"/>
        <dbReference type="ChEBI" id="CHEBI:15377"/>
        <dbReference type="ChEBI" id="CHEBI:15378"/>
        <dbReference type="ChEBI" id="CHEBI:29961"/>
        <dbReference type="ChEBI" id="CHEBI:57967"/>
        <dbReference type="ChEBI" id="CHEBI:138102"/>
    </reaction>
    <physiologicalReaction direction="left-to-right" evidence="4">
        <dbReference type="Rhea" id="RHEA:54429"/>
    </physiologicalReaction>
</comment>
<comment type="catalytic activity">
    <reaction evidence="4">
        <text>5-O-(ADP-D-ribosyl)-L-glutamyl-[protein] + H2O = L-glutamyl-[protein] + ADP-D-ribose + H(+)</text>
        <dbReference type="Rhea" id="RHEA:58248"/>
        <dbReference type="Rhea" id="RHEA-COMP:10208"/>
        <dbReference type="Rhea" id="RHEA-COMP:15089"/>
        <dbReference type="ChEBI" id="CHEBI:15377"/>
        <dbReference type="ChEBI" id="CHEBI:15378"/>
        <dbReference type="ChEBI" id="CHEBI:29973"/>
        <dbReference type="ChEBI" id="CHEBI:57967"/>
        <dbReference type="ChEBI" id="CHEBI:142540"/>
    </reaction>
    <physiologicalReaction direction="left-to-right" evidence="4">
        <dbReference type="Rhea" id="RHEA:58249"/>
    </physiologicalReaction>
</comment>
<comment type="catalytic activity">
    <reaction evidence="2">
        <text>RNA(n) + ATP = RNA(n)-3'-adenine ribonucleotide + diphosphate</text>
        <dbReference type="Rhea" id="RHEA:11332"/>
        <dbReference type="Rhea" id="RHEA-COMP:14527"/>
        <dbReference type="Rhea" id="RHEA-COMP:17347"/>
        <dbReference type="ChEBI" id="CHEBI:30616"/>
        <dbReference type="ChEBI" id="CHEBI:33019"/>
        <dbReference type="ChEBI" id="CHEBI:140395"/>
        <dbReference type="ChEBI" id="CHEBI:173115"/>
        <dbReference type="EC" id="2.7.7.19"/>
    </reaction>
</comment>
<comment type="catalytic activity">
    <reaction evidence="5">
        <text>ADP-alpha-D-ribose 1''-phosphate + H2O = ADP-D-ribose + phosphate</text>
        <dbReference type="Rhea" id="RHEA:25029"/>
        <dbReference type="ChEBI" id="CHEBI:15377"/>
        <dbReference type="ChEBI" id="CHEBI:43474"/>
        <dbReference type="ChEBI" id="CHEBI:57967"/>
        <dbReference type="ChEBI" id="CHEBI:58753"/>
        <dbReference type="EC" id="3.1.3.84"/>
    </reaction>
    <physiologicalReaction direction="left-to-right" evidence="5">
        <dbReference type="Rhea" id="RHEA:25030"/>
    </physiologicalReaction>
</comment>
<comment type="cofactor">
    <cofactor evidence="2">
        <name>Mg(2+)</name>
        <dbReference type="ChEBI" id="CHEBI:18420"/>
    </cofactor>
    <cofactor evidence="2">
        <name>Mn(2+)</name>
        <dbReference type="ChEBI" id="CHEBI:29035"/>
    </cofactor>
    <text evidence="2">For nsP4 adenylyltransferase activity; Mn(2+) supports catalysis at 60% of the levels observed with Mg(2+).</text>
</comment>
<comment type="cofactor">
    <cofactor evidence="2">
        <name>Mg(2+)</name>
        <dbReference type="ChEBI" id="CHEBI:18420"/>
    </cofactor>
    <text evidence="2">For nsP4 RNA-directed RNA polymerase activity.</text>
</comment>
<comment type="cofactor">
    <cofactor evidence="4">
        <name>Mg(2+)</name>
        <dbReference type="ChEBI" id="CHEBI:18420"/>
    </cofactor>
    <text evidence="4">For nsP1 guanylylation.</text>
</comment>
<comment type="cofactor">
    <cofactor>
        <name>Mg(2+)</name>
        <dbReference type="ChEBI" id="CHEBI:18420"/>
    </cofactor>
    <text evidence="6">For nsP2 RNA triphosphatase activity.</text>
</comment>
<comment type="cofactor">
    <cofactor>
        <name>Mg(2+)</name>
        <dbReference type="ChEBI" id="CHEBI:18420"/>
    </cofactor>
    <text evidence="6">For nsP2 NTPase activity.</text>
</comment>
<comment type="activity regulation">
    <molecule>mRNA-capping enzyme nsP1</molecule>
    <text evidence="4">Inhibited by sinefungin.</text>
</comment>
<comment type="biophysicochemical properties">
    <kinetics>
        <KM evidence="4">110 uM for a 12 residues substrate for nsp2 protease activity</KM>
    </kinetics>
    <phDependence>
        <text evidence="4">Optimum pH is 7 for nsP1 guanylylation.</text>
    </phDependence>
</comment>
<comment type="subunit">
    <molecule>mRNA-capping enzyme nsP1</molecule>
    <text evidence="4 6">Interacts with non-structural protein 3 (By similarity). Interacts with RNA-directed RNA polymerase nsP4 (By similarity). Interacts with protease nsP2 (By similarity). interacts with itself (By similarity).</text>
</comment>
<comment type="subunit">
    <molecule>Non-structural protein 3</molecule>
    <text evidence="4 6">Interacts with mRNA-capping enzyme nsP1 (By similarity). Interacts with host DDX1 (By similarity). Interacts with host DDX3 (By similarity). Interacts (via C-terminus) with host FXR1; this interaction inhibits the formation of host stress granules on viral mRNAs and the nsp3-FXR1 complexes bind viral RNAs and probably orchestrate the assembly of viral replication complexes (By similarity). Interacts (via C-terminus) with host FXR2; this interaction inhibits the formation of host stress granules on viral mRNAs and the nsp3-FXR2 complexes bind viral RNAs and probably orchestrate the assembly of viral replication complexes (By similarity). Interacts (via C-terminus) with host FMR1; this interaction inhibits the formation of host stress granules on viral mRNAs and the nsp3-FMR1 complexes bind viral RNAs and probably orchestrate the assembly of viral replication complexes (By similarity).</text>
</comment>
<comment type="subunit">
    <molecule>RNA-directed RNA polymerase nsP4</molecule>
    <text evidence="4 6">Interacts with mRNA-capping enzyme nsP1 (By similarity). Interacts with protease nsP2 (By similarity). interacts with itself (By similarity).</text>
</comment>
<comment type="subunit">
    <molecule>Protease nsP2</molecule>
    <text evidence="4 6">Interacts with RNA-directed RNA polymerase nsP4 (By similarity). Interacts with mRNA-capping enzyme nsP1 (By similarity). Interacts with KPNA1/karyopherin-alpha1; this interaction probably allows the active transport of protease nsP2 into the host nucleus (By similarity).</text>
</comment>
<comment type="subcellular location">
    <molecule>Polyprotein P1234</molecule>
    <subcellularLocation>
        <location evidence="13">Host cytoplasmic vesicle membrane</location>
        <topology evidence="13">Peripheral membrane protein</topology>
    </subcellularLocation>
    <text evidence="13">Part of cytoplasmic vesicles, which are probably formed at the plasma membrane and internalized leading to late endosomal/lysosomal spherules containing the replication complex.</text>
</comment>
<comment type="subcellular location">
    <molecule>Polyprotein P123'</molecule>
    <subcellularLocation>
        <location evidence="13">Host cytoplasmic vesicle membrane</location>
        <topology evidence="13">Peripheral membrane protein</topology>
    </subcellularLocation>
    <text evidence="13">Part of cytoplasmic vesicles, which are probably formed at the plasma membrane and internalized leading to late endosomal/lysosomal spherules containing the replication complex.</text>
</comment>
<comment type="subcellular location">
    <molecule>Polyprotein P123</molecule>
    <subcellularLocation>
        <location evidence="13">Host cytoplasmic vesicle membrane</location>
        <topology evidence="13">Peripheral membrane protein</topology>
    </subcellularLocation>
    <text evidence="13">Part of cytoplasmic vesicles, which are probably formed at the plasma membrane and internalized leading to late endosomal/lysosomal spherules containing the replication complex.</text>
</comment>
<comment type="subcellular location">
    <molecule>mRNA-capping enzyme nsP1</molecule>
    <subcellularLocation>
        <location evidence="3">Host cytoplasmic vesicle membrane</location>
        <topology evidence="3">Lipid-anchor</topology>
    </subcellularLocation>
    <subcellularLocation>
        <location evidence="3">Host cell membrane</location>
        <topology evidence="3">Lipid-anchor</topology>
        <orientation evidence="3">Cytoplasmic side</orientation>
    </subcellularLocation>
    <subcellularLocation>
        <location evidence="3">Host cell projection</location>
        <location evidence="3">Host filopodium</location>
    </subcellularLocation>
    <text evidence="3">In the late phase of infection, the polyprotein is quickly cleaved before localization to cellular membranes. Then a fraction of nsP1 localizes to the inner surface of the plasma membrane and its filopodial extensions. Only the palmitoylated nsP1 localizes to the host filopodia (By similarity). NsP1 is also part of cytoplasmic vesicles, which are probably formed at the plasma membrane and internalized leading to late endosomal/lysosomal spherules containing the replication complex (By similarity).</text>
</comment>
<comment type="subcellular location">
    <molecule>Protease nsP2</molecule>
    <subcellularLocation>
        <location evidence="3">Host cytoplasmic vesicle membrane</location>
        <topology evidence="3">Peripheral membrane protein</topology>
    </subcellularLocation>
    <subcellularLocation>
        <location evidence="4">Host nucleus</location>
    </subcellularLocation>
    <subcellularLocation>
        <location evidence="4">Host cytoplasm</location>
    </subcellularLocation>
    <text evidence="3 4">In the late phase of infection, the polyprotein is quickly cleaved before localization to cellular membranes. Then approximately half of nsP2 is found in the nucleus (By similarity). Shuttles between cytoplasm and nucleus (By similarity). NsP2 is also part of cytoplasmic vesicles, which are probably formed at the plasma membrane and internalized leading to late endosomal/lysosomal spherules containing the replication complex (By similarity).</text>
</comment>
<comment type="subcellular location">
    <molecule>Non-structural protein 3</molecule>
    <subcellularLocation>
        <location evidence="2">Host cytoplasmic vesicle membrane</location>
        <topology evidence="13">Peripheral membrane protein</topology>
    </subcellularLocation>
    <text evidence="2">In the late phase of infection, the polyprotein is quickly cleaved before localization to cellular membranes. Then nsP3 and nsP3' form aggregates in cytoplasm (By similarity). NsP3 is also part of cytoplasmic vesicles, which are probably formed at the plasma membrane and internalized leading to late endosomal/lysosomal spherules containing the replication complex (By similarity).</text>
</comment>
<comment type="subcellular location">
    <molecule>Non-structural protein 3'</molecule>
    <subcellularLocation>
        <location evidence="13">Host cytoplasmic vesicle membrane</location>
        <topology evidence="13">Peripheral membrane protein</topology>
    </subcellularLocation>
    <text evidence="2 13">In the late phase of infection, the polyprotein is quickly cleaved before localization to cellular membranes. Then nsP3 and nsP3' form aggregates in cytoplasm (By similarity). NsP3' is also part of cytoplasmic vesicles, which are probably formed at the plasma membrane and internalized leading to late endosomal/lysosomal spherules containing the replication complex (Probable).</text>
</comment>
<comment type="subcellular location">
    <molecule>RNA-directed RNA polymerase nsP4</molecule>
    <subcellularLocation>
        <location>Host cytoplasmic vesicle membrane</location>
        <topology evidence="3">Peripheral membrane protein</topology>
    </subcellularLocation>
    <text evidence="3">NsP4 is part of cytoplasmic vesicles, which are probably formed at the plasma membrane and internalized leading to late endosomal/lysosomal spherules containing the replication complex.</text>
</comment>
<comment type="domain">
    <molecule>Protease nsP2</molecule>
    <text evidence="4 6">The N-terminus exhibits NTPase and RNA triphosphatase activities and is proposed to have helicase activity, whereas the C-terminus possesses protease activity (By similarity). Contains a nuclear localization signal and a nuclear export signal, these two motifs are probably involved in the shuttling between the cytoplasm and the nucleus of nsP2 (By similarity).</text>
</comment>
<comment type="domain">
    <molecule>Non-structural protein 3</molecule>
    <text evidence="2 4">In the N-terminus, the macro domain displays a mono-ADP-ribosylhydrolase activity (By similarity). The central part has a zinc-binding function (By similarity). The C-terminus contains two approximate repeats necessary and sufficient for formation of the nsP3/FXR complex (By similarity).</text>
</comment>
<comment type="domain">
    <molecule>Non-structural protein 3'</molecule>
    <text evidence="2 4">In the N-terminus, the macro domain displays a mono-ADP-ribosylhydrolase activity (By similarity). The central part has a zinc-binding function (By similarity). The C-terminus contains two approximate repeats necessary and sufficient for formation of the nsP3'/FXR complex (By similarity).</text>
</comment>
<comment type="PTM">
    <molecule>Polyprotein P1234</molecule>
    <text evidence="2">Specific enzymatic cleavages in vivo yield mature proteins (By similarity). The processing of the polyprotein is temporally regulated (By similarity). In early stages (1.7 hpi), P1234 is first cleaved in trans through its nsP2 protease activity, releasing P123' and nsP4, which associate to form the early replication complex (By similarity). At the same time, P1234 is also cut at the nsP1/nsP2 site early in infection but with lower efficiency (By similarity). After replication of the viral minus-strand RNAs (4 hpi), the polyproteins are cut at the nsP1/nsP2 and nsP2/nsP3 sites very efficiently, preventing accumulation of P123' and P1234 and allowing the formation of the late replication complex (By similarity). NsP3'/nsP4 site is not cleaved anymore and P34 is produced rather than nsP4 (By similarity).</text>
</comment>
<comment type="PTM">
    <molecule>Polyprotein P123</molecule>
    <text evidence="2">Specific enzymatic cleavages in vivo yield mature proteins (By similarity). The processing of the polyprotein is temporally regulated (By similarity). In early stages (1.7 hpi), P123 is cleaved at the nsP1/nsP2 site with low efficiency (By similarity). After replication of the viral minus-strand RNAs (4 hpi), the polyproteins are cut at the nsP1/nsP2 and nsP2/nsP3 sites very efficiently, preventing accumulation of P123 and allowing the formation of the late replication complex (By similarity).</text>
</comment>
<comment type="PTM">
    <molecule>Polyprotein P123'</molecule>
    <text evidence="2">Specific enzymatic cleavages in vivo yield mature proteins (By similarity). The processing of the polyprotein is temporally regulated (By similarity). In early stages (1.7 hpi), P123' is cleaved at the nsP1/nsP2 site with low efficiency (By similarity). After replication of the viral minus-strand RNAs (4 hpi), the polyproteins are cut at the nsP1/nsP2 and nsP2/nsP3 sites very efficiently, preventing accumulation of P123' and allowing the formation of the late replication complex (By similarity).</text>
</comment>
<comment type="PTM">
    <molecule>mRNA-capping enzyme nsP1</molecule>
    <text evidence="2">Palmitoylated by host palmitoyltransferases ZDHHC2 and ZDHHC19.</text>
</comment>
<comment type="PTM">
    <molecule>Non-structural protein 3</molecule>
    <text evidence="3">Phosphorylated by host on serines and threonines.</text>
</comment>
<comment type="PTM">
    <molecule>Non-structural protein 3'</molecule>
    <text evidence="3">Phosphorylated by host on serines and threonines.</text>
</comment>
<comment type="PTM">
    <molecule>RNA-directed RNA polymerase nsP4</molecule>
    <text evidence="2">Ubiquitinated; targets the protein for rapid degradation via the ubiquitin system (By similarity). Nsp4 is present in extremely low quantities due to low frequency of translation through the amber stop-codon and the degradation by the ubiquitin pathway (By similarity).</text>
</comment>
<comment type="miscellaneous">
    <text evidence="2">Viral replication produces dsRNA in the late phase of infection, resulting in a strong activation of host EIF2AK2/PKR, leading to almost complete phosphorylation of EIF2A (By similarity). This inactivates completely cellular translation initiation, resulting shutoff of host proteins synthesis (By similarity). However, phosphorylation of EIF2A is probably not the only mechanism responsible for the host translation shutoff (By similarity). The viral translation can still occur normally because it relies on a hairpin structure in the coding region of sgRNA and is EIF2A-, EIF2D-, EIF4G- EIF4A-independent (By similarity).</text>
</comment>
<comment type="miscellaneous">
    <text evidence="1 2">The genome codes for P123, but readthrough of a terminator codon UGA occurs between the codons for Gln-1871 and Arg-1873 giving rise to P1234. P1234 is cleaved quickly by nsP2 into P123' and nsP4 (By similarity). Further processing of p123' gives nsP1, nsP2 and nsP3' which is 6 amino acids longer than nsP3 since the cleavage site is after the readthrough (By similarity). This unusual molecular mechanism ensures that few nsP4 are produced compared to other non-structural proteins (By similarity). Mutant viruses with no alternative termination site grow significantly slower than wild-type virus (By similarity). The opal termination codon is frequently mutated to a sense codon on passage in cell culture (By similarity). The presence of the opal codon may be a requirement for viral maintenance in both vertebrate and invertebrate hosts and a selective advantage may be conferred in cell culture for the sense codon (By similarity).</text>
</comment>
<accession>P36327</accession>
<protein>
    <recommendedName>
        <fullName>Polyprotein P1234</fullName>
        <shortName>P1234</shortName>
    </recommendedName>
    <alternativeName>
        <fullName>Non-structural polyprotein</fullName>
    </alternativeName>
    <component>
        <recommendedName>
            <fullName>Polyprotein P123'</fullName>
            <shortName>P123'</shortName>
        </recommendedName>
    </component>
    <component>
        <recommendedName>
            <fullName>Polyprotein P123</fullName>
            <shortName>P123</shortName>
        </recommendedName>
    </component>
    <component>
        <recommendedName>
            <fullName>mRNA-capping enzyme nsP1</fullName>
            <ecNumber evidence="5">2.1.1.-</ecNumber>
            <ecNumber evidence="5">2.7.7.-</ecNumber>
        </recommendedName>
        <alternativeName>
            <fullName>Non-structural protein 1</fullName>
        </alternativeName>
    </component>
    <component>
        <recommendedName>
            <fullName>Protease nsP2</fullName>
            <ecNumber evidence="4">3.4.22.-</ecNumber>
            <ecNumber evidence="6">3.6.1.15</ecNumber>
            <ecNumber evidence="3">3.6.1.74</ecNumber>
            <ecNumber evidence="6">3.6.4.13</ecNumber>
        </recommendedName>
        <alternativeName>
            <fullName>Non-structural protein 2</fullName>
            <shortName>nsP2</shortName>
        </alternativeName>
    </component>
    <component>
        <recommendedName>
            <fullName>Non-structural protein 3'</fullName>
            <shortName>nsP3'</shortName>
            <ecNumber evidence="4">3.1.3.84</ecNumber>
        </recommendedName>
    </component>
    <component>
        <recommendedName>
            <fullName>Non-structural protein 3</fullName>
            <shortName>nsP3</shortName>
            <ecNumber evidence="4">3.1.3.84</ecNumber>
        </recommendedName>
    </component>
    <component>
        <recommendedName>
            <fullName>RNA-directed RNA polymerase nsP4</fullName>
            <ecNumber evidence="2">2.7.7.19</ecNumber>
            <ecNumber evidence="8">2.7.7.48</ecNumber>
        </recommendedName>
        <alternativeName>
            <fullName>Non-structural protein 4</fullName>
            <shortName>nsP4</shortName>
        </alternativeName>
    </component>
</protein>
<sequence>MEKVHVDIEEDSPFLRALQRSFPQFEVEAKQVTDNDHANARAFSHLASKLIETEVDPSDTILDIGSAPARRMYSKHKYHCICPMRCAEDPDRLYKYATKLKKNCKEITDKELDKKMKELAAVMSDPDLETETMCLHDDESCRYEGQVAVYQDVYAVDGPTSLYHQANKGVRVAYWIGFDTTPFMFKNLAGAYPSYSTNWADETVLTARNIGLCSSDVMERSRRGMSILRKKYLKPSNNVLFSVGSTIYHEKRDLLRSWHLPSVFHLRGKQNYTCRCETIVSCDGYVVKRIAISPGLYGKPSGYAATMHREGFLCCKVTDTLNGERVSFPVCTYVPATLCDQMTGILATDVSADDAQKLLVGLNQRIVVNGRTQRNTNTMKNYLLPVVAQAFARWAKEYKEDQEDERPLGLRDRQLVMGCCWAFRRHKITSIYKRPDTQTIIKVNSDFHSFVLPRIGSNTLEIGLRTRIRKMLEEHKEPSPLITAEDIQEAKCAADEAKEVREAEELRAVLPPLAADVEEPTLEADVDLMLQEAGAGSVETPRGLIKVTSYAGEDKIGSYAVLSPQAVLKSEKLSCIHPLAEQVIVITHSGRKGRYAVEPYHGKVVVPEGHAIPVQDFQALSESATIVYNEREFVNRYLHHIATHGGALNTDEEYYKTVKPSEHDGEYLYDIDRKQCVKKELVTGLGLTGELVDPPFHEFAYESLRTRPAAPYQVPTIGVYGVPGSGKSGIIKSAVTKKDLVVSAKKENCAEIIRDVKRIKGLDVNARTVDSVLLNGCKYPVETLYIDEAFACHAGTLRALIAIIRPKKAVLCGDPKQCGFFNMMCLKVHFNHEICTQVFHKSISRRCTKSVTSVVSTLFYDKRMRTTNPKETKIEIDTTGSTKPKQDDLILTCFRGWVKQLQIDYKGNEVMTAAASQGLTRKGVYAVRYKVNENPLYAPTSEHVNVLLTRTEDRIVWKTLAGDPWIKTLTAKYPGNFTATIEEWQAEHDAIMRHILERPDPTDVFQNKANVCWAKALVPVLKTAGIDMTTEQWNTVDYFETDKAHSAEIVLNQLCVRFFGLDLDSGLFSAPTVPLSIRNNHWDNSPSPNMYGLNKEVVRQLSRRYPQLPRAVTTGRVYDMNTGTLRNYDPRINLVPVNRRLPHALVLHHNEHPQSDFSSFVSKLKGRTVLVVGEKLSVPGKTVDWLSDRPEATFRARLDLGIPGDVPKYDIIFINVRTPYKYHHYQQCEDHAIKLSMLTKKACLHLNPGGTCVSIGYGYADRASESIIGAIARQFKFSRVCKPKSSLEETEVLFVFIGYDRKARTHNPYKLSSTLTNIYTGSRLHEAGCAPSYHVVRGDIATATEGVIINAANSKGQPGGGVCGALYKKFPESFDLQPIEVGKARLVKGAAKHIIHAVGPNFNKVSEIEGDKQLAEAYESIAKIVNDNNYKSVAIPLLSTGIFSGNKDRLTQSLNHLLTALDTTDADVAIYCRDKKWEMTLKEAVARREAVEEICISDDSSVTEPDAELVRVHPKSSLAGRKGYSTSDGKTFSYLEGTKFHQAAKDIAEINAMWPVATEANEQVCMYILGESMSSIRSKCPVEESEASTPPSTLPCLCIHAMTPERVQRLKASRPEQITVCSSFPLPKYRITGVQKIQCSQPILFSPKVPAYIHPRKYLVETPTVEENQSTEGTPEQPTLITVGETRTRTPEPIIIEEEEDSISLLSDGPTHQVLQVEADIHGPPSASSSSWSIPHASDFDVDSLSILDTLEGASVTSEEASVETNSHFARSMEFLARPVPAPRTVFRNPPQPAPRTRTPSLAPSRASSRISLVSNPPGVNRVITREELEALTPSRAPSRSVSRTSLVSNPPGVNRVITREEFEAFVAQQQXRFDAGAYIFSSDTGQGHLQQKSVRQTVLSEVVLERTELEISYAPRLDQEKEELLRKKLQLNPTPANRSRYQSRRVENMKAITARRILQGLGHYLKAEGKVECYRTLHPVPLYSSSVNRAFSSPKVAVEACNAMLKENFPTVASYCIIPEYDAYLDMVDGASCCLDTASFCPAKLRSFPKKHSYLEPTIRSAVPSAIQNTLQNVLAAATKRNCNVTQMRELPVLDSAAFNVECFKKYACNNEYWETFKENPIRLTEENVVNYITKLKGPKAAALFAKTHNLNMLQDIPMDRFVMDLKRDVKVTPGTKHTEERPKVQVIQAADPLATAYLCGIHRELVRRLNAVLLPNIHTLFDMSAEDFDAIIAEHFQPGDCVLETDIASFDKSEDDAMALTALMILEDLGVDAELLTLIEAAFGEISSIHLPTKTKFKFGAMMKSGMFLTLFVNTVINIVIASRVLRERLTGSPCAAFIGDDNIVKGVKSDKLMADRCATWLNMEVKIIDAVVGEKAPYFCGGFILCDSVTGTACRVADPLKRLFKLGKPLAADDEHDDDRRRALHEESTRWNRVGILPELCKAVESRYETVGTSIIVMAMTTLASSVKSFSYLRGAPITLYG</sequence>
<name>POLN_EEVV3</name>
<keyword id="KW-0067">ATP-binding</keyword>
<keyword id="KW-1262">Eukaryotic host gene expression shutoff by virus</keyword>
<keyword id="KW-1191">Eukaryotic host transcription shutoff by virus</keyword>
<keyword id="KW-0342">GTP-binding</keyword>
<keyword id="KW-0347">Helicase</keyword>
<keyword id="KW-1032">Host cell membrane</keyword>
<keyword id="KW-1034">Host cell projection</keyword>
<keyword id="KW-1035">Host cytoplasm</keyword>
<keyword id="KW-1036">Host cytoplasmic vesicle</keyword>
<keyword id="KW-1190">Host gene expression shutoff by virus</keyword>
<keyword id="KW-1043">Host membrane</keyword>
<keyword id="KW-1048">Host nucleus</keyword>
<keyword id="KW-0945">Host-virus interaction</keyword>
<keyword id="KW-0378">Hydrolase</keyword>
<keyword id="KW-1104">Inhibition of host RNA polymerase II by virus</keyword>
<keyword id="KW-0449">Lipoprotein</keyword>
<keyword id="KW-0472">Membrane</keyword>
<keyword id="KW-0479">Metal-binding</keyword>
<keyword id="KW-0489">Methyltransferase</keyword>
<keyword id="KW-0506">mRNA capping</keyword>
<keyword id="KW-0507">mRNA processing</keyword>
<keyword id="KW-0511">Multifunctional enzyme</keyword>
<keyword id="KW-0547">Nucleotide-binding</keyword>
<keyword id="KW-0548">Nucleotidyltransferase</keyword>
<keyword id="KW-0564">Palmitate</keyword>
<keyword id="KW-0597">Phosphoprotein</keyword>
<keyword id="KW-0645">Protease</keyword>
<keyword id="KW-0677">Repeat</keyword>
<keyword id="KW-1159">RNA suppression of termination</keyword>
<keyword id="KW-0694">RNA-binding</keyword>
<keyword id="KW-0696">RNA-directed RNA polymerase</keyword>
<keyword id="KW-0949">S-adenosyl-L-methionine</keyword>
<keyword id="KW-0788">Thiol protease</keyword>
<keyword id="KW-0808">Transferase</keyword>
<keyword id="KW-0832">Ubl conjugation</keyword>
<keyword id="KW-0693">Viral RNA replication</keyword>
<keyword id="KW-0862">Zinc</keyword>
<organismHost>
    <name type="scientific">Bos taurus</name>
    <name type="common">Bovine</name>
    <dbReference type="NCBI Taxonomy" id="9913"/>
</organismHost>
<organismHost>
    <name type="scientific">Didelphis marsupialis</name>
    <name type="common">Southern opossum</name>
    <dbReference type="NCBI Taxonomy" id="9268"/>
</organismHost>
<organismHost>
    <name type="scientific">Equus asinus</name>
    <name type="common">Donkey</name>
    <name type="synonym">Equus africanus asinus</name>
    <dbReference type="NCBI Taxonomy" id="9793"/>
</organismHost>
<organismHost>
    <name type="scientific">Equus caballus</name>
    <name type="common">Horse</name>
    <dbReference type="NCBI Taxonomy" id="9796"/>
</organismHost>
<organismHost>
    <name type="scientific">Homo sapiens</name>
    <name type="common">Human</name>
    <dbReference type="NCBI Taxonomy" id="9606"/>
</organismHost>
<organismHost>
    <name type="scientific">Melanoconion</name>
    <dbReference type="NCBI Taxonomy" id="53535"/>
</organismHost>
<organismHost>
    <name type="scientific">Philander opossum</name>
    <name type="common">Gray four-eyed opossum</name>
    <dbReference type="NCBI Taxonomy" id="9272"/>
</organismHost>
<organismHost>
    <name type="scientific">Proechimys</name>
    <dbReference type="NCBI Taxonomy" id="10162"/>
</organismHost>
<organismHost>
    <name type="scientific">Sigmodon hispidus</name>
    <name type="common">Hispid cotton rat</name>
    <dbReference type="NCBI Taxonomy" id="42415"/>
</organismHost>
<dbReference type="EC" id="2.1.1.-" evidence="5"/>
<dbReference type="EC" id="2.7.7.-" evidence="5"/>
<dbReference type="EC" id="3.4.22.-" evidence="4"/>
<dbReference type="EC" id="3.6.1.15" evidence="6"/>
<dbReference type="EC" id="3.6.1.74" evidence="3"/>
<dbReference type="EC" id="3.6.4.13" evidence="6"/>
<dbReference type="EC" id="3.1.3.84" evidence="4"/>
<dbReference type="EC" id="2.7.7.19" evidence="2"/>
<dbReference type="EC" id="2.7.7.48" evidence="8"/>
<dbReference type="EMBL" id="L00930">
    <property type="protein sequence ID" value="AAC19324.1"/>
    <property type="molecule type" value="Genomic_RNA"/>
</dbReference>
<dbReference type="EMBL" id="L00930">
    <property type="protein sequence ID" value="AAC19326.1"/>
    <property type="status" value="ALT_SEQ"/>
    <property type="molecule type" value="Genomic_RNA"/>
</dbReference>
<dbReference type="PIR" id="C44213">
    <property type="entry name" value="C44213"/>
</dbReference>
<dbReference type="IntAct" id="P36327">
    <property type="interactions" value="1"/>
</dbReference>
<dbReference type="MEROPS" id="C09.002"/>
<dbReference type="Proteomes" id="UP000008299">
    <property type="component" value="Segment"/>
</dbReference>
<dbReference type="GO" id="GO:0044162">
    <property type="term" value="C:host cell cytoplasmic vesicle membrane"/>
    <property type="evidence" value="ECO:0007669"/>
    <property type="project" value="UniProtKB-SubCell"/>
</dbReference>
<dbReference type="GO" id="GO:0044176">
    <property type="term" value="C:host cell filopodium"/>
    <property type="evidence" value="ECO:0007669"/>
    <property type="project" value="UniProtKB-SubCell"/>
</dbReference>
<dbReference type="GO" id="GO:0042025">
    <property type="term" value="C:host cell nucleus"/>
    <property type="evidence" value="ECO:0007669"/>
    <property type="project" value="UniProtKB-SubCell"/>
</dbReference>
<dbReference type="GO" id="GO:0020002">
    <property type="term" value="C:host cell plasma membrane"/>
    <property type="evidence" value="ECO:0007669"/>
    <property type="project" value="UniProtKB-SubCell"/>
</dbReference>
<dbReference type="GO" id="GO:0016020">
    <property type="term" value="C:membrane"/>
    <property type="evidence" value="ECO:0007669"/>
    <property type="project" value="UniProtKB-KW"/>
</dbReference>
<dbReference type="GO" id="GO:0005524">
    <property type="term" value="F:ATP binding"/>
    <property type="evidence" value="ECO:0007669"/>
    <property type="project" value="UniProtKB-KW"/>
</dbReference>
<dbReference type="GO" id="GO:0016887">
    <property type="term" value="F:ATP hydrolysis activity"/>
    <property type="evidence" value="ECO:0007669"/>
    <property type="project" value="RHEA"/>
</dbReference>
<dbReference type="GO" id="GO:0008234">
    <property type="term" value="F:cysteine-type peptidase activity"/>
    <property type="evidence" value="ECO:0007669"/>
    <property type="project" value="UniProtKB-KW"/>
</dbReference>
<dbReference type="GO" id="GO:0005525">
    <property type="term" value="F:GTP binding"/>
    <property type="evidence" value="ECO:0007669"/>
    <property type="project" value="UniProtKB-KW"/>
</dbReference>
<dbReference type="GO" id="GO:0046872">
    <property type="term" value="F:metal ion binding"/>
    <property type="evidence" value="ECO:0007669"/>
    <property type="project" value="UniProtKB-KW"/>
</dbReference>
<dbReference type="GO" id="GO:0140818">
    <property type="term" value="F:mRNA 5'-triphosphate monophosphatase activity"/>
    <property type="evidence" value="ECO:0007669"/>
    <property type="project" value="RHEA"/>
</dbReference>
<dbReference type="GO" id="GO:0008174">
    <property type="term" value="F:mRNA methyltransferase activity"/>
    <property type="evidence" value="ECO:0007669"/>
    <property type="project" value="InterPro"/>
</dbReference>
<dbReference type="GO" id="GO:1990817">
    <property type="term" value="F:poly(A) RNA polymerase activity"/>
    <property type="evidence" value="ECO:0007669"/>
    <property type="project" value="UniProtKB-EC"/>
</dbReference>
<dbReference type="GO" id="GO:0004651">
    <property type="term" value="F:polynucleotide 5'-phosphatase activity"/>
    <property type="evidence" value="ECO:0007669"/>
    <property type="project" value="UniProtKB-EC"/>
</dbReference>
<dbReference type="GO" id="GO:0003723">
    <property type="term" value="F:RNA binding"/>
    <property type="evidence" value="ECO:0007669"/>
    <property type="project" value="UniProtKB-KW"/>
</dbReference>
<dbReference type="GO" id="GO:0003724">
    <property type="term" value="F:RNA helicase activity"/>
    <property type="evidence" value="ECO:0007669"/>
    <property type="project" value="UniProtKB-EC"/>
</dbReference>
<dbReference type="GO" id="GO:0003968">
    <property type="term" value="F:RNA-directed RNA polymerase activity"/>
    <property type="evidence" value="ECO:0007669"/>
    <property type="project" value="UniProtKB-KW"/>
</dbReference>
<dbReference type="GO" id="GO:0006370">
    <property type="term" value="P:7-methylguanosine mRNA capping"/>
    <property type="evidence" value="ECO:0007669"/>
    <property type="project" value="UniProtKB-KW"/>
</dbReference>
<dbReference type="GO" id="GO:0006351">
    <property type="term" value="P:DNA-templated transcription"/>
    <property type="evidence" value="ECO:0007669"/>
    <property type="project" value="InterPro"/>
</dbReference>
<dbReference type="GO" id="GO:0032259">
    <property type="term" value="P:methylation"/>
    <property type="evidence" value="ECO:0007669"/>
    <property type="project" value="UniProtKB-KW"/>
</dbReference>
<dbReference type="GO" id="GO:0016556">
    <property type="term" value="P:mRNA modification"/>
    <property type="evidence" value="ECO:0007669"/>
    <property type="project" value="InterPro"/>
</dbReference>
<dbReference type="GO" id="GO:0006508">
    <property type="term" value="P:proteolysis"/>
    <property type="evidence" value="ECO:0007669"/>
    <property type="project" value="UniProtKB-KW"/>
</dbReference>
<dbReference type="GO" id="GO:0039657">
    <property type="term" value="P:symbiont-mediated suppression of host gene expression"/>
    <property type="evidence" value="ECO:0007669"/>
    <property type="project" value="UniProtKB-KW"/>
</dbReference>
<dbReference type="GO" id="GO:0039523">
    <property type="term" value="P:symbiont-mediated suppression of host mRNA transcription via inhibition of RNA polymerase II activity"/>
    <property type="evidence" value="ECO:0007669"/>
    <property type="project" value="UniProtKB-KW"/>
</dbReference>
<dbReference type="GO" id="GO:0039694">
    <property type="term" value="P:viral RNA genome replication"/>
    <property type="evidence" value="ECO:0007669"/>
    <property type="project" value="InterPro"/>
</dbReference>
<dbReference type="CDD" id="cd21557">
    <property type="entry name" value="Macro_X_Nsp3-like"/>
    <property type="match status" value="1"/>
</dbReference>
<dbReference type="CDD" id="cd23250">
    <property type="entry name" value="Togaviridae_RdRp"/>
    <property type="match status" value="1"/>
</dbReference>
<dbReference type="FunFam" id="3.40.220.10:FF:000015">
    <property type="entry name" value="Polyprotein P1234"/>
    <property type="match status" value="1"/>
</dbReference>
<dbReference type="FunFam" id="3.40.50.300:FF:001403">
    <property type="entry name" value="Polyprotein P1234"/>
    <property type="match status" value="1"/>
</dbReference>
<dbReference type="FunFam" id="3.40.50.300:FF:001415">
    <property type="entry name" value="Polyprotein P1234"/>
    <property type="match status" value="1"/>
</dbReference>
<dbReference type="Gene3D" id="3.90.70.110">
    <property type="entry name" value="Alphavirus nsP2 protease domain"/>
    <property type="match status" value="1"/>
</dbReference>
<dbReference type="Gene3D" id="3.40.220.10">
    <property type="entry name" value="Leucine Aminopeptidase, subunit E, domain 1"/>
    <property type="match status" value="1"/>
</dbReference>
<dbReference type="Gene3D" id="3.40.50.300">
    <property type="entry name" value="P-loop containing nucleotide triphosphate hydrolases"/>
    <property type="match status" value="2"/>
</dbReference>
<dbReference type="Gene3D" id="3.40.50.150">
    <property type="entry name" value="Vaccinia Virus protein VP39"/>
    <property type="match status" value="1"/>
</dbReference>
<dbReference type="InterPro" id="IPR027351">
    <property type="entry name" value="(+)RNA_virus_helicase_core_dom"/>
</dbReference>
<dbReference type="InterPro" id="IPR002588">
    <property type="entry name" value="Alphavirus-like_MT_dom"/>
</dbReference>
<dbReference type="InterPro" id="IPR002620">
    <property type="entry name" value="Alphavirus_nsp2pro"/>
</dbReference>
<dbReference type="InterPro" id="IPR044936">
    <property type="entry name" value="Alphavirus_nsp2pro_sf"/>
</dbReference>
<dbReference type="InterPro" id="IPR043502">
    <property type="entry name" value="DNA/RNA_pol_sf"/>
</dbReference>
<dbReference type="InterPro" id="IPR002589">
    <property type="entry name" value="Macro_dom"/>
</dbReference>
<dbReference type="InterPro" id="IPR043472">
    <property type="entry name" value="Macro_dom-like"/>
</dbReference>
<dbReference type="InterPro" id="IPR044371">
    <property type="entry name" value="Macro_X_NSP3-like"/>
</dbReference>
<dbReference type="InterPro" id="IPR048891">
    <property type="entry name" value="nsP3_ZBD"/>
</dbReference>
<dbReference type="InterPro" id="IPR027417">
    <property type="entry name" value="P-loop_NTPase"/>
</dbReference>
<dbReference type="InterPro" id="IPR001788">
    <property type="entry name" value="RNA-dep_RNA_pol_alsuvir"/>
</dbReference>
<dbReference type="InterPro" id="IPR007094">
    <property type="entry name" value="RNA-dir_pol_PSvirus"/>
</dbReference>
<dbReference type="InterPro" id="IPR029063">
    <property type="entry name" value="SAM-dependent_MTases_sf"/>
</dbReference>
<dbReference type="InterPro" id="IPR047311">
    <property type="entry name" value="Togaviridae_RdRp"/>
</dbReference>
<dbReference type="InterPro" id="IPR049329">
    <property type="entry name" value="ToMV_Hel_N"/>
</dbReference>
<dbReference type="PANTHER" id="PTHR11106">
    <property type="entry name" value="GANGLIOSIDE INDUCED DIFFERENTIATION ASSOCIATED PROTEIN 2-RELATED"/>
    <property type="match status" value="1"/>
</dbReference>
<dbReference type="Pfam" id="PF01661">
    <property type="entry name" value="Macro"/>
    <property type="match status" value="1"/>
</dbReference>
<dbReference type="Pfam" id="PF20852">
    <property type="entry name" value="nsP3_ZBD"/>
    <property type="match status" value="1"/>
</dbReference>
<dbReference type="Pfam" id="PF01707">
    <property type="entry name" value="Peptidase_C9"/>
    <property type="match status" value="1"/>
</dbReference>
<dbReference type="Pfam" id="PF00978">
    <property type="entry name" value="RdRP_2"/>
    <property type="match status" value="1"/>
</dbReference>
<dbReference type="Pfam" id="PF20896">
    <property type="entry name" value="ToMV_Hel_N"/>
    <property type="match status" value="1"/>
</dbReference>
<dbReference type="Pfam" id="PF01443">
    <property type="entry name" value="Viral_helicase1"/>
    <property type="match status" value="1"/>
</dbReference>
<dbReference type="Pfam" id="PF01660">
    <property type="entry name" value="Vmethyltransf"/>
    <property type="match status" value="1"/>
</dbReference>
<dbReference type="SMART" id="SM00506">
    <property type="entry name" value="A1pp"/>
    <property type="match status" value="1"/>
</dbReference>
<dbReference type="SUPFAM" id="SSF56672">
    <property type="entry name" value="DNA/RNA polymerases"/>
    <property type="match status" value="1"/>
</dbReference>
<dbReference type="SUPFAM" id="SSF52949">
    <property type="entry name" value="Macro domain-like"/>
    <property type="match status" value="1"/>
</dbReference>
<dbReference type="SUPFAM" id="SSF52540">
    <property type="entry name" value="P-loop containing nucleoside triphosphate hydrolases"/>
    <property type="match status" value="1"/>
</dbReference>
<dbReference type="PROSITE" id="PS51743">
    <property type="entry name" value="ALPHAVIRUS_MT"/>
    <property type="match status" value="1"/>
</dbReference>
<dbReference type="PROSITE" id="PS51154">
    <property type="entry name" value="MACRO"/>
    <property type="match status" value="1"/>
</dbReference>
<dbReference type="PROSITE" id="PS51520">
    <property type="entry name" value="NSP2PRO"/>
    <property type="match status" value="1"/>
</dbReference>
<dbReference type="PROSITE" id="PS51657">
    <property type="entry name" value="PSRV_HELICASE"/>
    <property type="match status" value="1"/>
</dbReference>
<dbReference type="PROSITE" id="PS50507">
    <property type="entry name" value="RDRP_SSRNA_POS"/>
    <property type="match status" value="1"/>
</dbReference>
<evidence type="ECO:0000250" key="1">
    <source>
        <dbReference type="UniProtKB" id="O90368"/>
    </source>
</evidence>
<evidence type="ECO:0000250" key="2">
    <source>
        <dbReference type="UniProtKB" id="P03317"/>
    </source>
</evidence>
<evidence type="ECO:0000250" key="3">
    <source>
        <dbReference type="UniProtKB" id="P08411"/>
    </source>
</evidence>
<evidence type="ECO:0000250" key="4">
    <source>
        <dbReference type="UniProtKB" id="P27282"/>
    </source>
</evidence>
<evidence type="ECO:0000250" key="5">
    <source>
        <dbReference type="UniProtKB" id="P36328"/>
    </source>
</evidence>
<evidence type="ECO:0000250" key="6">
    <source>
        <dbReference type="UniProtKB" id="Q8JUX6"/>
    </source>
</evidence>
<evidence type="ECO:0000255" key="7">
    <source>
        <dbReference type="PROSITE-ProRule" id="PRU00490"/>
    </source>
</evidence>
<evidence type="ECO:0000255" key="8">
    <source>
        <dbReference type="PROSITE-ProRule" id="PRU00539"/>
    </source>
</evidence>
<evidence type="ECO:0000255" key="9">
    <source>
        <dbReference type="PROSITE-ProRule" id="PRU00853"/>
    </source>
</evidence>
<evidence type="ECO:0000255" key="10">
    <source>
        <dbReference type="PROSITE-ProRule" id="PRU00990"/>
    </source>
</evidence>
<evidence type="ECO:0000255" key="11">
    <source>
        <dbReference type="PROSITE-ProRule" id="PRU01079"/>
    </source>
</evidence>
<evidence type="ECO:0000256" key="12">
    <source>
        <dbReference type="SAM" id="MobiDB-lite"/>
    </source>
</evidence>
<evidence type="ECO:0000305" key="13"/>